<reference key="1">
    <citation type="submission" date="2005-08" db="EMBL/GenBank/DDBJ databases">
        <title>Complete sequence of Chlorobium chlorochromatii CaD3.</title>
        <authorList>
            <consortium name="US DOE Joint Genome Institute"/>
            <person name="Copeland A."/>
            <person name="Lucas S."/>
            <person name="Lapidus A."/>
            <person name="Barry K."/>
            <person name="Detter J.C."/>
            <person name="Glavina T."/>
            <person name="Hammon N."/>
            <person name="Israni S."/>
            <person name="Pitluck S."/>
            <person name="Bryant D."/>
            <person name="Schmutz J."/>
            <person name="Larimer F."/>
            <person name="Land M."/>
            <person name="Kyrpides N."/>
            <person name="Ivanova N."/>
            <person name="Richardson P."/>
        </authorList>
    </citation>
    <scope>NUCLEOTIDE SEQUENCE [LARGE SCALE GENOMIC DNA]</scope>
    <source>
        <strain>CaD3</strain>
    </source>
</reference>
<feature type="chain" id="PRO_1000067143" description="HPr kinase/phosphorylase">
    <location>
        <begin position="1"/>
        <end position="333"/>
    </location>
</feature>
<feature type="region of interest" description="Important for the catalytic mechanism of both phosphorylation and dephosphorylation" evidence="1">
    <location>
        <begin position="219"/>
        <end position="228"/>
    </location>
</feature>
<feature type="region of interest" description="Important for the catalytic mechanism of dephosphorylation" evidence="1">
    <location>
        <begin position="282"/>
        <end position="287"/>
    </location>
</feature>
<feature type="active site" evidence="1">
    <location>
        <position position="155"/>
    </location>
</feature>
<feature type="active site" evidence="1">
    <location>
        <position position="176"/>
    </location>
</feature>
<feature type="active site" description="Proton acceptor; for phosphorylation activity. Proton donor; for dephosphorylation activity" evidence="1">
    <location>
        <position position="194"/>
    </location>
</feature>
<feature type="active site" evidence="1">
    <location>
        <position position="261"/>
    </location>
</feature>
<feature type="binding site" evidence="1">
    <location>
        <begin position="170"/>
        <end position="177"/>
    </location>
    <ligand>
        <name>ATP</name>
        <dbReference type="ChEBI" id="CHEBI:30616"/>
    </ligand>
</feature>
<feature type="binding site" evidence="1">
    <location>
        <position position="177"/>
    </location>
    <ligand>
        <name>Mg(2+)</name>
        <dbReference type="ChEBI" id="CHEBI:18420"/>
    </ligand>
</feature>
<feature type="binding site" evidence="1">
    <location>
        <position position="220"/>
    </location>
    <ligand>
        <name>Mg(2+)</name>
        <dbReference type="ChEBI" id="CHEBI:18420"/>
    </ligand>
</feature>
<gene>
    <name evidence="1" type="primary">hprK</name>
    <name type="ordered locus">Cag_1764</name>
</gene>
<keyword id="KW-0067">ATP-binding</keyword>
<keyword id="KW-0418">Kinase</keyword>
<keyword id="KW-0460">Magnesium</keyword>
<keyword id="KW-0479">Metal-binding</keyword>
<keyword id="KW-0511">Multifunctional enzyme</keyword>
<keyword id="KW-0547">Nucleotide-binding</keyword>
<keyword id="KW-0723">Serine/threonine-protein kinase</keyword>
<keyword id="KW-0808">Transferase</keyword>
<comment type="function">
    <text evidence="1">Catalyzes the ATP- as well as the pyrophosphate-dependent phosphorylation of a specific serine residue in HPr, a phosphocarrier protein of the phosphoenolpyruvate-dependent sugar phosphotransferase system (PTS). HprK/P also catalyzes the pyrophosphate-producing, inorganic phosphate-dependent dephosphorylation (phosphorolysis) of seryl-phosphorylated HPr (P-Ser-HPr).</text>
</comment>
<comment type="catalytic activity">
    <reaction evidence="1">
        <text>[HPr protein]-L-serine + ATP = [HPr protein]-O-phospho-L-serine + ADP + H(+)</text>
        <dbReference type="Rhea" id="RHEA:46600"/>
        <dbReference type="Rhea" id="RHEA-COMP:11602"/>
        <dbReference type="Rhea" id="RHEA-COMP:11603"/>
        <dbReference type="ChEBI" id="CHEBI:15378"/>
        <dbReference type="ChEBI" id="CHEBI:29999"/>
        <dbReference type="ChEBI" id="CHEBI:30616"/>
        <dbReference type="ChEBI" id="CHEBI:83421"/>
        <dbReference type="ChEBI" id="CHEBI:456216"/>
    </reaction>
</comment>
<comment type="catalytic activity">
    <reaction evidence="1">
        <text>[HPr protein]-O-phospho-L-serine + phosphate + H(+) = [HPr protein]-L-serine + diphosphate</text>
        <dbReference type="Rhea" id="RHEA:46604"/>
        <dbReference type="Rhea" id="RHEA-COMP:11602"/>
        <dbReference type="Rhea" id="RHEA-COMP:11603"/>
        <dbReference type="ChEBI" id="CHEBI:15378"/>
        <dbReference type="ChEBI" id="CHEBI:29999"/>
        <dbReference type="ChEBI" id="CHEBI:33019"/>
        <dbReference type="ChEBI" id="CHEBI:43474"/>
        <dbReference type="ChEBI" id="CHEBI:83421"/>
    </reaction>
</comment>
<comment type="cofactor">
    <cofactor evidence="1">
        <name>Mg(2+)</name>
        <dbReference type="ChEBI" id="CHEBI:18420"/>
    </cofactor>
</comment>
<comment type="subunit">
    <text evidence="1">Homohexamer.</text>
</comment>
<comment type="domain">
    <text evidence="1">The Walker A ATP-binding motif also binds Pi and PPi.</text>
</comment>
<comment type="miscellaneous">
    <text evidence="1">Both phosphorylation and phosphorolysis are carried out by the same active site and suggest a common mechanism for both reactions.</text>
</comment>
<comment type="similarity">
    <text evidence="1">Belongs to the HPrK/P family.</text>
</comment>
<organism>
    <name type="scientific">Chlorobium chlorochromatii (strain CaD3)</name>
    <dbReference type="NCBI Taxonomy" id="340177"/>
    <lineage>
        <taxon>Bacteria</taxon>
        <taxon>Pseudomonadati</taxon>
        <taxon>Chlorobiota</taxon>
        <taxon>Chlorobiia</taxon>
        <taxon>Chlorobiales</taxon>
        <taxon>Chlorobiaceae</taxon>
        <taxon>Chlorobium/Pelodictyon group</taxon>
        <taxon>Chlorobium</taxon>
    </lineage>
</organism>
<sequence length="333" mass="38128">MIFDQKGIRKRSITVAYFYNTISQKCCDLKLRRVNNVDEQKRRIYERDLHRPGLALAGFTNLFTYKRVQIFGNTETRFLNHLDDEKERNRLFENFVRFKIPCIILTSNNKLPESLIEMATRAEIPVYSTRCSSTKAIYNITDFLDDQFSIYQQYHGSMVDVYGVGVLLVGKSGLGKSEVALDLIERGHGLVADDAVVIRRKGESTTLMARRNNIIDHFMEIRGLGVVDMKANFGIRAIREQKEVQVVAELMHWDSDTEYERLGLDAKSTKILGVELPLVQLPILPGKNITVIIEVVALNFLLKRYSNYVAAEALHSRISQVINSERTNFDGDE</sequence>
<evidence type="ECO:0000255" key="1">
    <source>
        <dbReference type="HAMAP-Rule" id="MF_01249"/>
    </source>
</evidence>
<dbReference type="EC" id="2.7.11.-" evidence="1"/>
<dbReference type="EC" id="2.7.4.-" evidence="1"/>
<dbReference type="EMBL" id="CP000108">
    <property type="protein sequence ID" value="ABB29015.1"/>
    <property type="molecule type" value="Genomic_DNA"/>
</dbReference>
<dbReference type="SMR" id="Q3APR0"/>
<dbReference type="STRING" id="340177.Cag_1764"/>
<dbReference type="KEGG" id="cch:Cag_1764"/>
<dbReference type="eggNOG" id="COG1493">
    <property type="taxonomic scope" value="Bacteria"/>
</dbReference>
<dbReference type="HOGENOM" id="CLU_052030_0_1_10"/>
<dbReference type="OrthoDB" id="9778803at2"/>
<dbReference type="GO" id="GO:0005524">
    <property type="term" value="F:ATP binding"/>
    <property type="evidence" value="ECO:0007669"/>
    <property type="project" value="UniProtKB-UniRule"/>
</dbReference>
<dbReference type="GO" id="GO:0000287">
    <property type="term" value="F:magnesium ion binding"/>
    <property type="evidence" value="ECO:0007669"/>
    <property type="project" value="UniProtKB-UniRule"/>
</dbReference>
<dbReference type="GO" id="GO:0000155">
    <property type="term" value="F:phosphorelay sensor kinase activity"/>
    <property type="evidence" value="ECO:0007669"/>
    <property type="project" value="InterPro"/>
</dbReference>
<dbReference type="GO" id="GO:0004674">
    <property type="term" value="F:protein serine/threonine kinase activity"/>
    <property type="evidence" value="ECO:0007669"/>
    <property type="project" value="UniProtKB-KW"/>
</dbReference>
<dbReference type="GO" id="GO:0004712">
    <property type="term" value="F:protein serine/threonine/tyrosine kinase activity"/>
    <property type="evidence" value="ECO:0007669"/>
    <property type="project" value="UniProtKB-UniRule"/>
</dbReference>
<dbReference type="GO" id="GO:0006109">
    <property type="term" value="P:regulation of carbohydrate metabolic process"/>
    <property type="evidence" value="ECO:0007669"/>
    <property type="project" value="UniProtKB-UniRule"/>
</dbReference>
<dbReference type="CDD" id="cd01918">
    <property type="entry name" value="HprK_C"/>
    <property type="match status" value="1"/>
</dbReference>
<dbReference type="Gene3D" id="3.40.1390.20">
    <property type="entry name" value="HprK N-terminal domain-like"/>
    <property type="match status" value="1"/>
</dbReference>
<dbReference type="Gene3D" id="3.40.50.300">
    <property type="entry name" value="P-loop containing nucleotide triphosphate hydrolases"/>
    <property type="match status" value="1"/>
</dbReference>
<dbReference type="HAMAP" id="MF_01249">
    <property type="entry name" value="HPr_kinase"/>
    <property type="match status" value="1"/>
</dbReference>
<dbReference type="InterPro" id="IPR003755">
    <property type="entry name" value="HPr(Ser)_kin/Pase"/>
</dbReference>
<dbReference type="InterPro" id="IPR011104">
    <property type="entry name" value="Hpr_kin/Pase_C"/>
</dbReference>
<dbReference type="InterPro" id="IPR011126">
    <property type="entry name" value="Hpr_kin/Pase_Hpr_N"/>
</dbReference>
<dbReference type="InterPro" id="IPR027417">
    <property type="entry name" value="P-loop_NTPase"/>
</dbReference>
<dbReference type="InterPro" id="IPR028979">
    <property type="entry name" value="Ser_kin/Pase_Hpr-like_N_sf"/>
</dbReference>
<dbReference type="NCBIfam" id="TIGR00679">
    <property type="entry name" value="hpr-ser"/>
    <property type="match status" value="1"/>
</dbReference>
<dbReference type="PANTHER" id="PTHR30305:SF1">
    <property type="entry name" value="HPR KINASE_PHOSPHORYLASE"/>
    <property type="match status" value="1"/>
</dbReference>
<dbReference type="PANTHER" id="PTHR30305">
    <property type="entry name" value="PROTEIN YJDM-RELATED"/>
    <property type="match status" value="1"/>
</dbReference>
<dbReference type="Pfam" id="PF07475">
    <property type="entry name" value="Hpr_kinase_C"/>
    <property type="match status" value="1"/>
</dbReference>
<dbReference type="Pfam" id="PF02603">
    <property type="entry name" value="Hpr_kinase_N"/>
    <property type="match status" value="1"/>
</dbReference>
<dbReference type="SUPFAM" id="SSF75138">
    <property type="entry name" value="HprK N-terminal domain-like"/>
    <property type="match status" value="1"/>
</dbReference>
<dbReference type="SUPFAM" id="SSF53795">
    <property type="entry name" value="PEP carboxykinase-like"/>
    <property type="match status" value="1"/>
</dbReference>
<accession>Q3APR0</accession>
<name>HPRK_CHLCH</name>
<protein>
    <recommendedName>
        <fullName evidence="1">HPr kinase/phosphorylase</fullName>
        <shortName evidence="1">HPrK/P</shortName>
        <ecNumber evidence="1">2.7.11.-</ecNumber>
        <ecNumber evidence="1">2.7.4.-</ecNumber>
    </recommendedName>
    <alternativeName>
        <fullName evidence="1">HPr(Ser) kinase/phosphorylase</fullName>
    </alternativeName>
</protein>
<proteinExistence type="inferred from homology"/>